<protein>
    <recommendedName>
        <fullName>Lck-interacting transmembrane adapter 1</fullName>
    </recommendedName>
    <alternativeName>
        <fullName>Lck-interacting molecule</fullName>
    </alternativeName>
</protein>
<reference key="1">
    <citation type="journal article" date="2003" name="J. Exp. Med.">
        <title>LIME, a novel transmembrane adaptor protein, associates with p56lck and mediates T cell activation.</title>
        <authorList>
            <person name="Hur E.M."/>
            <person name="Son M."/>
            <person name="Lee O.-H."/>
            <person name="Choi Y.B."/>
            <person name="Park C."/>
            <person name="Lee H."/>
            <person name="Yun Y."/>
        </authorList>
    </citation>
    <scope>NUCLEOTIDE SEQUENCE [MRNA]</scope>
    <scope>INTERACTION WITH LCK; PTPN11; GRB2; PIK3R1 AND GRAP2</scope>
    <scope>TISSUE SPECIFICITY</scope>
    <scope>INDUCTION</scope>
    <scope>MUTAGENESIS OF CYS-28; CYS-31; TYR-242 AND TYR-261</scope>
    <scope>PALMITOYLATION AT CYS-28 AND CYS-31</scope>
    <scope>PHOSPHORYLATION AT TYR-242 AND TYR-261</scope>
    <scope>SUBCELLULAR LOCATION</scope>
    <scope>FUNCTION</scope>
    <source>
        <tissue>Lung</tissue>
    </source>
</reference>
<reference key="2">
    <citation type="journal article" date="2004" name="Genome Res.">
        <title>The status, quality, and expansion of the NIH full-length cDNA project: the Mammalian Gene Collection (MGC).</title>
        <authorList>
            <consortium name="The MGC Project Team"/>
        </authorList>
    </citation>
    <scope>NUCLEOTIDE SEQUENCE [LARGE SCALE MRNA]</scope>
    <source>
        <tissue>Eye</tissue>
    </source>
</reference>
<reference key="3">
    <citation type="journal article" date="2006" name="Blood">
        <title>LIME acts as a transmembrane adapter mediating BCR-dependent B-cell activation.</title>
        <authorList>
            <person name="Ahn E."/>
            <person name="Lee H."/>
            <person name="Yun Y."/>
        </authorList>
    </citation>
    <scope>TISSUE SPECIFICITY</scope>
    <scope>PHOSPHORYLATION AT TYR-137</scope>
    <scope>INTERACTION WITH PIK3R1; LYN; PLCG2 AND GRB2</scope>
    <scope>MUTAGENESIS OF TYR-137; TYR-242 AND TYR-261</scope>
    <scope>FUNCTION</scope>
</reference>
<proteinExistence type="evidence at protein level"/>
<feature type="chain" id="PRO_0000083333" description="Lck-interacting transmembrane adapter 1">
    <location>
        <begin position="1"/>
        <end position="269"/>
    </location>
</feature>
<feature type="topological domain" description="Extracellular" evidence="3">
    <location>
        <begin position="1"/>
        <end position="7"/>
    </location>
</feature>
<feature type="transmembrane region" description="Helical; Signal-anchor for type III membrane protein" evidence="3">
    <location>
        <begin position="8"/>
        <end position="28"/>
    </location>
</feature>
<feature type="topological domain" description="Cytoplasmic" evidence="3">
    <location>
        <begin position="29"/>
        <end position="269"/>
    </location>
</feature>
<feature type="region of interest" description="Disordered" evidence="4">
    <location>
        <begin position="102"/>
        <end position="133"/>
    </location>
</feature>
<feature type="region of interest" description="Interaction with GRB2">
    <location>
        <begin position="137"/>
        <end position="140"/>
    </location>
</feature>
<feature type="region of interest" description="Interaction with CSK" evidence="1">
    <location>
        <begin position="175"/>
        <end position="178"/>
    </location>
</feature>
<feature type="region of interest" description="Interaction with CSK" evidence="1">
    <location>
        <begin position="207"/>
        <end position="210"/>
    </location>
</feature>
<feature type="region of interest" description="Interaction with LCK and PIK3R1" evidence="5">
    <location>
        <begin position="242"/>
        <end position="245"/>
    </location>
</feature>
<feature type="region of interest" description="Interaction with LCK, PLCG2 and PIK3R1" evidence="5 6">
    <location>
        <begin position="261"/>
        <end position="264"/>
    </location>
</feature>
<feature type="compositionally biased region" description="Pro residues" evidence="4">
    <location>
        <begin position="115"/>
        <end position="124"/>
    </location>
</feature>
<feature type="modified residue" description="Phosphotyrosine" evidence="8">
    <location>
        <position position="137"/>
    </location>
</feature>
<feature type="modified residue" description="Phosphotyrosine" evidence="2">
    <location>
        <position position="175"/>
    </location>
</feature>
<feature type="modified residue" description="Phosphotyrosine" evidence="2">
    <location>
        <position position="207"/>
    </location>
</feature>
<feature type="modified residue" description="Phosphotyrosine; by LYN or LCK" evidence="7">
    <location>
        <position position="242"/>
    </location>
</feature>
<feature type="modified residue" description="Phosphotyrosine; by LYN or LCK" evidence="7">
    <location>
        <position position="261"/>
    </location>
</feature>
<feature type="modified residue" description="Phosphoserine" evidence="2">
    <location>
        <position position="263"/>
    </location>
</feature>
<feature type="lipid moiety-binding region" description="S-palmitoyl cysteine" evidence="7">
    <location>
        <position position="28"/>
    </location>
</feature>
<feature type="lipid moiety-binding region" description="S-palmitoyl cysteine" evidence="7">
    <location>
        <position position="31"/>
    </location>
</feature>
<feature type="mutagenesis site" description="Abolishes palmitoylation and lipid raft localization; when associated with S-31." evidence="5">
    <original>C</original>
    <variation>S</variation>
    <location>
        <position position="28"/>
    </location>
</feature>
<feature type="mutagenesis site" description="Abolishes palmitoylation and lipid raft localization; when associated with S-28." evidence="5">
    <original>C</original>
    <variation>S</variation>
    <location>
        <position position="31"/>
    </location>
</feature>
<feature type="mutagenesis site" description="Reduces GRB2 binding." evidence="6">
    <original>Y</original>
    <variation>F</variation>
    <location>
        <position position="137"/>
    </location>
</feature>
<feature type="mutagenesis site" description="Abolishes LCK, PIK3R1 and LYN binding; when associated with F-261." evidence="5 6">
    <original>Y</original>
    <variation>F</variation>
    <location>
        <position position="242"/>
    </location>
</feature>
<feature type="mutagenesis site" description="Strongly reduces PLCG2 binding. Abolishes LCK, PIK3R1 and LYN binding; when associated with F-242." evidence="5 6">
    <original>Y</original>
    <variation>F</variation>
    <location>
        <position position="261"/>
    </location>
</feature>
<name>LIME1_MOUSE</name>
<comment type="function">
    <text evidence="5 6">Involved in BCR (B-cell antigen receptor)-mediated signaling in B-cells and TCR (T-cell antigen receptor)-mediated T-cell signaling in T-cells. In absence of TCR signaling, may be involved in CD4-mediated inhibition of T-cell activation. Couples activation of these receptors and their associated kinases with distal intracellular events such as calcium mobilization or MAPK activation through the recruitment of PLCG2, GRB2, GRAP2, and other signaling molecules.</text>
</comment>
<comment type="subunit">
    <text evidence="1 5 6">When phosphorylated in response to TCR stimulation and/or CD4 costimulation, interacts with LCK, CSK, FYN, PTPN11/SHP2, GRB2, PIK3R1 and GRAP2 (By similarity). When phosphorylated in response to BCR activation, interacts with LYN, PIK3R1, PLCG2 and GRB2.</text>
</comment>
<comment type="subcellular location">
    <subcellularLocation>
        <location evidence="5">Cell membrane</location>
        <topology evidence="5">Single-pass type III membrane protein</topology>
    </subcellularLocation>
    <text>Present in lipid rafts. Recruited to the immunological synapse upon conjugation of T-cell with antigen-presenting cell.</text>
</comment>
<comment type="tissue specificity">
    <text evidence="5 6">Expressed in spleen and lung. Present in primary B-cells and peripheral T-cells (at protein level).</text>
</comment>
<comment type="induction">
    <text evidence="5">Up-regulated in T-cells following TCR engagement.</text>
</comment>
<comment type="PTM">
    <text evidence="5">Palmitoylation of Cys-28 and Cys-31 is required for raft targeting.</text>
</comment>
<comment type="PTM">
    <text evidence="5 6">Phosphorylated on tyrosines upon TCR activation and/or CD4 coreceptor stimulation, or upon BCR stimulation; which leads to the recruitment of SH2-containing proteins.</text>
</comment>
<dbReference type="EMBL" id="AF115339">
    <property type="protein sequence ID" value="AAG35210.1"/>
    <property type="molecule type" value="mRNA"/>
</dbReference>
<dbReference type="EMBL" id="BC023065">
    <property type="protein sequence ID" value="AAH23065.1"/>
    <property type="molecule type" value="mRNA"/>
</dbReference>
<dbReference type="CCDS" id="CCDS17211.1"/>
<dbReference type="RefSeq" id="NP_076173.1">
    <property type="nucleotide sequence ID" value="NM_023684.2"/>
</dbReference>
<dbReference type="SMR" id="Q9EQR5"/>
<dbReference type="FunCoup" id="Q9EQR5">
    <property type="interactions" value="26"/>
</dbReference>
<dbReference type="STRING" id="10090.ENSMUSP00000045010"/>
<dbReference type="iPTMnet" id="Q9EQR5"/>
<dbReference type="PhosphoSitePlus" id="Q9EQR5"/>
<dbReference type="SwissPalm" id="Q9EQR5"/>
<dbReference type="jPOST" id="Q9EQR5"/>
<dbReference type="PaxDb" id="10090-ENSMUSP00000045010"/>
<dbReference type="ProteomicsDB" id="292258"/>
<dbReference type="DNASU" id="72699"/>
<dbReference type="Ensembl" id="ENSMUST00000048077.12">
    <property type="protein sequence ID" value="ENSMUSP00000045010.6"/>
    <property type="gene ID" value="ENSMUSG00000090077.10"/>
</dbReference>
<dbReference type="GeneID" id="72699"/>
<dbReference type="KEGG" id="mmu:72699"/>
<dbReference type="UCSC" id="uc008omd.1">
    <property type="organism name" value="mouse"/>
</dbReference>
<dbReference type="AGR" id="MGI:1919949"/>
<dbReference type="CTD" id="54923"/>
<dbReference type="MGI" id="MGI:1919949">
    <property type="gene designation" value="Lime1"/>
</dbReference>
<dbReference type="VEuPathDB" id="HostDB:ENSMUSG00000090077"/>
<dbReference type="eggNOG" id="ENOG502RGRF">
    <property type="taxonomic scope" value="Eukaryota"/>
</dbReference>
<dbReference type="GeneTree" id="ENSGT00510000050080"/>
<dbReference type="HOGENOM" id="CLU_094813_0_0_1"/>
<dbReference type="InParanoid" id="Q9EQR5"/>
<dbReference type="OMA" id="GTCGART"/>
<dbReference type="OrthoDB" id="54588at9989"/>
<dbReference type="PhylomeDB" id="Q9EQR5"/>
<dbReference type="TreeFam" id="TF337416"/>
<dbReference type="BioGRID-ORCS" id="72699">
    <property type="hits" value="2 hits in 78 CRISPR screens"/>
</dbReference>
<dbReference type="ChiTaRS" id="Lime1">
    <property type="organism name" value="mouse"/>
</dbReference>
<dbReference type="PRO" id="PR:Q9EQR5"/>
<dbReference type="Proteomes" id="UP000000589">
    <property type="component" value="Chromosome 2"/>
</dbReference>
<dbReference type="RNAct" id="Q9EQR5">
    <property type="molecule type" value="protein"/>
</dbReference>
<dbReference type="Bgee" id="ENSMUSG00000090077">
    <property type="expression patterns" value="Expressed in granulocyte and 70 other cell types or tissues"/>
</dbReference>
<dbReference type="ExpressionAtlas" id="Q9EQR5">
    <property type="expression patterns" value="baseline and differential"/>
</dbReference>
<dbReference type="GO" id="GO:0019815">
    <property type="term" value="C:B cell receptor complex"/>
    <property type="evidence" value="ECO:0000314"/>
    <property type="project" value="MGI"/>
</dbReference>
<dbReference type="GO" id="GO:0019901">
    <property type="term" value="F:protein kinase binding"/>
    <property type="evidence" value="ECO:0000353"/>
    <property type="project" value="MGI"/>
</dbReference>
<dbReference type="GO" id="GO:0002250">
    <property type="term" value="P:adaptive immune response"/>
    <property type="evidence" value="ECO:0007669"/>
    <property type="project" value="UniProtKB-KW"/>
</dbReference>
<dbReference type="GO" id="GO:0050853">
    <property type="term" value="P:B cell receptor signaling pathway"/>
    <property type="evidence" value="ECO:0000314"/>
    <property type="project" value="MGI"/>
</dbReference>
<dbReference type="GO" id="GO:0043122">
    <property type="term" value="P:regulation of canonical NF-kappaB signal transduction"/>
    <property type="evidence" value="ECO:0000315"/>
    <property type="project" value="MGI"/>
</dbReference>
<dbReference type="GO" id="GO:1901222">
    <property type="term" value="P:regulation of non-canonical NF-kappaB signal transduction"/>
    <property type="evidence" value="ECO:0000315"/>
    <property type="project" value="MGI"/>
</dbReference>
<dbReference type="GO" id="GO:0051896">
    <property type="term" value="P:regulation of phosphatidylinositol 3-kinase/protein kinase B signal transduction"/>
    <property type="evidence" value="ECO:0000315"/>
    <property type="project" value="MGI"/>
</dbReference>
<dbReference type="GO" id="GO:0051279">
    <property type="term" value="P:regulation of release of sequestered calcium ion into cytosol"/>
    <property type="evidence" value="ECO:0000315"/>
    <property type="project" value="MGI"/>
</dbReference>
<dbReference type="GO" id="GO:0006357">
    <property type="term" value="P:regulation of transcription by RNA polymerase II"/>
    <property type="evidence" value="ECO:0000315"/>
    <property type="project" value="MGI"/>
</dbReference>
<dbReference type="GO" id="GO:0050852">
    <property type="term" value="P:T cell receptor signaling pathway"/>
    <property type="evidence" value="ECO:0007669"/>
    <property type="project" value="InterPro"/>
</dbReference>
<dbReference type="InterPro" id="IPR026072">
    <property type="entry name" value="Lime1"/>
</dbReference>
<dbReference type="PANTHER" id="PTHR47740:SF1">
    <property type="entry name" value="LCK-INTERACTING TRANSMEMBRANE ADAPTER 1"/>
    <property type="match status" value="1"/>
</dbReference>
<dbReference type="PANTHER" id="PTHR47740">
    <property type="entry name" value="LCK-INTERACTING TRANSMEMBRANE ADAPTER 1, LIME1"/>
    <property type="match status" value="1"/>
</dbReference>
<dbReference type="Pfam" id="PF15332">
    <property type="entry name" value="LIME1"/>
    <property type="match status" value="1"/>
</dbReference>
<gene>
    <name type="primary">Lime1</name>
    <name type="synonym">Lime</name>
</gene>
<organism>
    <name type="scientific">Mus musculus</name>
    <name type="common">Mouse</name>
    <dbReference type="NCBI Taxonomy" id="10090"/>
    <lineage>
        <taxon>Eukaryota</taxon>
        <taxon>Metazoa</taxon>
        <taxon>Chordata</taxon>
        <taxon>Craniata</taxon>
        <taxon>Vertebrata</taxon>
        <taxon>Euteleostomi</taxon>
        <taxon>Mammalia</taxon>
        <taxon>Eutheria</taxon>
        <taxon>Euarchontoglires</taxon>
        <taxon>Glires</taxon>
        <taxon>Rodentia</taxon>
        <taxon>Myomorpha</taxon>
        <taxon>Muroidea</taxon>
        <taxon>Muridae</taxon>
        <taxon>Murinae</taxon>
        <taxon>Mus</taxon>
        <taxon>Mus</taxon>
    </lineage>
</organism>
<evidence type="ECO:0000250" key="1"/>
<evidence type="ECO:0000250" key="2">
    <source>
        <dbReference type="UniProtKB" id="Q9H400"/>
    </source>
</evidence>
<evidence type="ECO:0000255" key="3"/>
<evidence type="ECO:0000256" key="4">
    <source>
        <dbReference type="SAM" id="MobiDB-lite"/>
    </source>
</evidence>
<evidence type="ECO:0000269" key="5">
    <source>
    </source>
</evidence>
<evidence type="ECO:0000269" key="6">
    <source>
    </source>
</evidence>
<evidence type="ECO:0000305" key="7">
    <source>
    </source>
</evidence>
<evidence type="ECO:0000305" key="8">
    <source>
    </source>
</evidence>
<keyword id="KW-1064">Adaptive immunity</keyword>
<keyword id="KW-1003">Cell membrane</keyword>
<keyword id="KW-0391">Immunity</keyword>
<keyword id="KW-0449">Lipoprotein</keyword>
<keyword id="KW-0472">Membrane</keyword>
<keyword id="KW-0564">Palmitate</keyword>
<keyword id="KW-0597">Phosphoprotein</keyword>
<keyword id="KW-1185">Reference proteome</keyword>
<keyword id="KW-0735">Signal-anchor</keyword>
<keyword id="KW-0812">Transmembrane</keyword>
<keyword id="KW-1133">Transmembrane helix</keyword>
<accession>Q9EQR5</accession>
<sequence length="269" mass="29551">MRPPVPSAPLALWVLGCFSLLLWLWALCTACHRKRAQRQQTGLQDSLVPVEMPLLRQTHLCSLSKSDTRLHELHRGPRSSIAPRPASMDLLHPRWLEMSRGSTRSQVPNSAFPPRQLPRAPPAAPATAPSTSSEATYSNVGLAAIPRASLAASPVVWAGTQLTISCARLGPGAEYACIQKHKGTEQGCQELQQKAKVIPATQMDVLYSRVCKPKRRDPRPVTDQLNLQDGRTSLPLGSDVEYEAINLRGQDMKQGPLENVYESIKEMGL</sequence>